<sequence length="387" mass="41426">MASILQAIRYSRGKLAIIDQLQLPYVEKFITIQTPEDAWHAIKEMRVRGAPAIAIVAALALASELNTLIVHDKLSSGAEEVKLFIREKLDYLVSSRPTAVNLSDAARKLESTISDHADTPGATGRTVAEAFIRAAEDMMTKDLDDNMRIGKNGAEWIIKHALAARKSTATVLTHCNTGSLATSGYGTALGVIRALASKKALEHAYCTETRPYNQGSRLTAFELVHDRLPATLITDSMVAALLANTKAEVDAIVVGADRVAANGDTANKIGTYGLAVLAKYHGVKFLVAAPLTTIDLGTKSGEDIVIEERPAAEVTKIRGPVDGDHSADIVKLETVHIAAKGINVWNPAFDVTPSTLIDGIITEVGVIEKGTDGQFHLERLFIDNSAS</sequence>
<accession>A1CY38</accession>
<comment type="function">
    <text evidence="1">Catalyzes the interconversion of methylthioribose-1-phosphate (MTR-1-P) into methylthioribulose-1-phosphate (MTRu-1-P).</text>
</comment>
<comment type="catalytic activity">
    <reaction evidence="1">
        <text>5-(methylsulfanyl)-alpha-D-ribose 1-phosphate = 5-(methylsulfanyl)-D-ribulose 1-phosphate</text>
        <dbReference type="Rhea" id="RHEA:19989"/>
        <dbReference type="ChEBI" id="CHEBI:58533"/>
        <dbReference type="ChEBI" id="CHEBI:58548"/>
        <dbReference type="EC" id="5.3.1.23"/>
    </reaction>
</comment>
<comment type="pathway">
    <text evidence="1">Amino-acid biosynthesis; L-methionine biosynthesis via salvage pathway; L-methionine from S-methyl-5-thio-alpha-D-ribose 1-phosphate: step 1/6.</text>
</comment>
<comment type="subcellular location">
    <subcellularLocation>
        <location evidence="1">Cytoplasm</location>
    </subcellularLocation>
    <subcellularLocation>
        <location evidence="1">Nucleus</location>
    </subcellularLocation>
</comment>
<comment type="similarity">
    <text evidence="1">Belongs to the eIF-2B alpha/beta/delta subunits family. MtnA subfamily.</text>
</comment>
<organism>
    <name type="scientific">Neosartorya fischeri (strain ATCC 1020 / DSM 3700 / CBS 544.65 / FGSC A1164 / JCM 1740 / NRRL 181 / WB 181)</name>
    <name type="common">Aspergillus fischerianus</name>
    <dbReference type="NCBI Taxonomy" id="331117"/>
    <lineage>
        <taxon>Eukaryota</taxon>
        <taxon>Fungi</taxon>
        <taxon>Dikarya</taxon>
        <taxon>Ascomycota</taxon>
        <taxon>Pezizomycotina</taxon>
        <taxon>Eurotiomycetes</taxon>
        <taxon>Eurotiomycetidae</taxon>
        <taxon>Eurotiales</taxon>
        <taxon>Aspergillaceae</taxon>
        <taxon>Aspergillus</taxon>
        <taxon>Aspergillus subgen. Fumigati</taxon>
    </lineage>
</organism>
<name>MTNA_NEOFI</name>
<keyword id="KW-0028">Amino-acid biosynthesis</keyword>
<keyword id="KW-0963">Cytoplasm</keyword>
<keyword id="KW-0413">Isomerase</keyword>
<keyword id="KW-0486">Methionine biosynthesis</keyword>
<keyword id="KW-0539">Nucleus</keyword>
<keyword id="KW-1185">Reference proteome</keyword>
<protein>
    <recommendedName>
        <fullName evidence="1">Methylthioribose-1-phosphate isomerase</fullName>
        <shortName evidence="1">M1Pi</shortName>
        <shortName evidence="1">MTR-1-P isomerase</shortName>
        <ecNumber evidence="1">5.3.1.23</ecNumber>
    </recommendedName>
    <alternativeName>
        <fullName evidence="1">S-methyl-5-thioribose-1-phosphate isomerase</fullName>
    </alternativeName>
    <alternativeName>
        <fullName evidence="1">Translation initiation factor eIF-2B subunit alpha/beta/delta-like protein</fullName>
    </alternativeName>
</protein>
<feature type="chain" id="PRO_0000402035" description="Methylthioribose-1-phosphate isomerase">
    <location>
        <begin position="1"/>
        <end position="387"/>
    </location>
</feature>
<feature type="active site" description="Proton donor" evidence="1">
    <location>
        <position position="257"/>
    </location>
</feature>
<feature type="site" description="Transition state stabilizer" evidence="1">
    <location>
        <position position="175"/>
    </location>
</feature>
<proteinExistence type="inferred from homology"/>
<reference key="1">
    <citation type="journal article" date="2008" name="PLoS Genet.">
        <title>Genomic islands in the pathogenic filamentous fungus Aspergillus fumigatus.</title>
        <authorList>
            <person name="Fedorova N.D."/>
            <person name="Khaldi N."/>
            <person name="Joardar V.S."/>
            <person name="Maiti R."/>
            <person name="Amedeo P."/>
            <person name="Anderson M.J."/>
            <person name="Crabtree J."/>
            <person name="Silva J.C."/>
            <person name="Badger J.H."/>
            <person name="Albarraq A."/>
            <person name="Angiuoli S."/>
            <person name="Bussey H."/>
            <person name="Bowyer P."/>
            <person name="Cotty P.J."/>
            <person name="Dyer P.S."/>
            <person name="Egan A."/>
            <person name="Galens K."/>
            <person name="Fraser-Liggett C.M."/>
            <person name="Haas B.J."/>
            <person name="Inman J.M."/>
            <person name="Kent R."/>
            <person name="Lemieux S."/>
            <person name="Malavazi I."/>
            <person name="Orvis J."/>
            <person name="Roemer T."/>
            <person name="Ronning C.M."/>
            <person name="Sundaram J.P."/>
            <person name="Sutton G."/>
            <person name="Turner G."/>
            <person name="Venter J.C."/>
            <person name="White O.R."/>
            <person name="Whitty B.R."/>
            <person name="Youngman P."/>
            <person name="Wolfe K.H."/>
            <person name="Goldman G.H."/>
            <person name="Wortman J.R."/>
            <person name="Jiang B."/>
            <person name="Denning D.W."/>
            <person name="Nierman W.C."/>
        </authorList>
    </citation>
    <scope>NUCLEOTIDE SEQUENCE [LARGE SCALE GENOMIC DNA]</scope>
    <source>
        <strain>ATCC 1020 / DSM 3700 / CBS 544.65 / FGSC A1164 / JCM 1740 / NRRL 181 / WB 181</strain>
    </source>
</reference>
<dbReference type="EC" id="5.3.1.23" evidence="1"/>
<dbReference type="EMBL" id="DS027685">
    <property type="protein sequence ID" value="EAW25540.1"/>
    <property type="molecule type" value="Genomic_DNA"/>
</dbReference>
<dbReference type="RefSeq" id="XP_001267437.1">
    <property type="nucleotide sequence ID" value="XM_001267436.1"/>
</dbReference>
<dbReference type="SMR" id="A1CY38"/>
<dbReference type="STRING" id="331117.A1CY38"/>
<dbReference type="EnsemblFungi" id="EAW25540">
    <property type="protein sequence ID" value="EAW25540"/>
    <property type="gene ID" value="NFIA_110340"/>
</dbReference>
<dbReference type="GeneID" id="4593349"/>
<dbReference type="KEGG" id="nfi:NFIA_110340"/>
<dbReference type="VEuPathDB" id="FungiDB:NFIA_110340"/>
<dbReference type="eggNOG" id="KOG1468">
    <property type="taxonomic scope" value="Eukaryota"/>
</dbReference>
<dbReference type="HOGENOM" id="CLU_016218_1_3_1"/>
<dbReference type="OMA" id="CETRPLN"/>
<dbReference type="OrthoDB" id="2461at2759"/>
<dbReference type="UniPathway" id="UPA00904">
    <property type="reaction ID" value="UER00874"/>
</dbReference>
<dbReference type="Proteomes" id="UP000006702">
    <property type="component" value="Unassembled WGS sequence"/>
</dbReference>
<dbReference type="GO" id="GO:0005737">
    <property type="term" value="C:cytoplasm"/>
    <property type="evidence" value="ECO:0007669"/>
    <property type="project" value="UniProtKB-SubCell"/>
</dbReference>
<dbReference type="GO" id="GO:0005634">
    <property type="term" value="C:nucleus"/>
    <property type="evidence" value="ECO:0007669"/>
    <property type="project" value="UniProtKB-SubCell"/>
</dbReference>
<dbReference type="GO" id="GO:0046523">
    <property type="term" value="F:S-methyl-5-thioribose-1-phosphate isomerase activity"/>
    <property type="evidence" value="ECO:0007669"/>
    <property type="project" value="UniProtKB-UniRule"/>
</dbReference>
<dbReference type="GO" id="GO:0019509">
    <property type="term" value="P:L-methionine salvage from methylthioadenosine"/>
    <property type="evidence" value="ECO:0007669"/>
    <property type="project" value="UniProtKB-UniRule"/>
</dbReference>
<dbReference type="FunFam" id="1.20.120.420:FF:000002">
    <property type="entry name" value="Methylthioribose-1-phosphate isomerase"/>
    <property type="match status" value="1"/>
</dbReference>
<dbReference type="FunFam" id="3.40.50.10470:FF:000010">
    <property type="entry name" value="Methylthioribose-1-phosphate isomerase"/>
    <property type="match status" value="1"/>
</dbReference>
<dbReference type="Gene3D" id="1.20.120.420">
    <property type="entry name" value="translation initiation factor eif-2b, domain 1"/>
    <property type="match status" value="1"/>
</dbReference>
<dbReference type="Gene3D" id="3.40.50.10470">
    <property type="entry name" value="Translation initiation factor eif-2b, domain 2"/>
    <property type="match status" value="1"/>
</dbReference>
<dbReference type="HAMAP" id="MF_01678">
    <property type="entry name" value="Salvage_MtnA"/>
    <property type="match status" value="1"/>
</dbReference>
<dbReference type="InterPro" id="IPR000649">
    <property type="entry name" value="IF-2B-related"/>
</dbReference>
<dbReference type="InterPro" id="IPR005251">
    <property type="entry name" value="IF-M1Pi"/>
</dbReference>
<dbReference type="InterPro" id="IPR042529">
    <property type="entry name" value="IF_2B-like_C"/>
</dbReference>
<dbReference type="InterPro" id="IPR011559">
    <property type="entry name" value="Initiation_fac_2B_a/b/d"/>
</dbReference>
<dbReference type="InterPro" id="IPR027363">
    <property type="entry name" value="M1Pi_N"/>
</dbReference>
<dbReference type="InterPro" id="IPR037171">
    <property type="entry name" value="NagB/RpiA_transferase-like"/>
</dbReference>
<dbReference type="NCBIfam" id="TIGR00524">
    <property type="entry name" value="eIF-2B_rel"/>
    <property type="match status" value="1"/>
</dbReference>
<dbReference type="NCBIfam" id="NF004326">
    <property type="entry name" value="PRK05720.1"/>
    <property type="match status" value="1"/>
</dbReference>
<dbReference type="NCBIfam" id="TIGR00512">
    <property type="entry name" value="salvage_mtnA"/>
    <property type="match status" value="1"/>
</dbReference>
<dbReference type="PANTHER" id="PTHR43475">
    <property type="entry name" value="METHYLTHIORIBOSE-1-PHOSPHATE ISOMERASE"/>
    <property type="match status" value="1"/>
</dbReference>
<dbReference type="PANTHER" id="PTHR43475:SF1">
    <property type="entry name" value="METHYLTHIORIBOSE-1-PHOSPHATE ISOMERASE"/>
    <property type="match status" value="1"/>
</dbReference>
<dbReference type="Pfam" id="PF01008">
    <property type="entry name" value="IF-2B"/>
    <property type="match status" value="1"/>
</dbReference>
<dbReference type="SUPFAM" id="SSF100950">
    <property type="entry name" value="NagB/RpiA/CoA transferase-like"/>
    <property type="match status" value="1"/>
</dbReference>
<gene>
    <name type="primary">mri1</name>
    <name type="ORF">NFIA_110340</name>
</gene>
<evidence type="ECO:0000255" key="1">
    <source>
        <dbReference type="HAMAP-Rule" id="MF_03119"/>
    </source>
</evidence>